<keyword id="KW-0067">ATP-binding</keyword>
<keyword id="KW-0418">Kinase</keyword>
<keyword id="KW-0460">Magnesium</keyword>
<keyword id="KW-0479">Metal-binding</keyword>
<keyword id="KW-0547">Nucleotide-binding</keyword>
<keyword id="KW-0597">Phosphoprotein</keyword>
<keyword id="KW-1185">Reference proteome</keyword>
<keyword id="KW-0808">Transferase</keyword>
<protein>
    <recommendedName>
        <fullName evidence="1">Polyphosphate kinase</fullName>
        <ecNumber evidence="1">2.7.4.1</ecNumber>
    </recommendedName>
    <alternativeName>
        <fullName evidence="1">ATP-polyphosphate phosphotransferase</fullName>
    </alternativeName>
    <alternativeName>
        <fullName evidence="1">Polyphosphoric acid kinase</fullName>
    </alternativeName>
</protein>
<dbReference type="EC" id="2.7.4.1" evidence="1"/>
<dbReference type="EMBL" id="AE009442">
    <property type="protein sequence ID" value="AAO29797.1"/>
    <property type="molecule type" value="Genomic_DNA"/>
</dbReference>
<dbReference type="SMR" id="Q87A63"/>
<dbReference type="KEGG" id="xft:PD_1968"/>
<dbReference type="HOGENOM" id="CLU_009678_5_0_6"/>
<dbReference type="Proteomes" id="UP000002516">
    <property type="component" value="Chromosome"/>
</dbReference>
<dbReference type="GO" id="GO:0009358">
    <property type="term" value="C:polyphosphate kinase complex"/>
    <property type="evidence" value="ECO:0007669"/>
    <property type="project" value="InterPro"/>
</dbReference>
<dbReference type="GO" id="GO:0005524">
    <property type="term" value="F:ATP binding"/>
    <property type="evidence" value="ECO:0007669"/>
    <property type="project" value="UniProtKB-KW"/>
</dbReference>
<dbReference type="GO" id="GO:0046872">
    <property type="term" value="F:metal ion binding"/>
    <property type="evidence" value="ECO:0007669"/>
    <property type="project" value="UniProtKB-KW"/>
</dbReference>
<dbReference type="GO" id="GO:0008976">
    <property type="term" value="F:polyphosphate kinase activity"/>
    <property type="evidence" value="ECO:0007669"/>
    <property type="project" value="UniProtKB-UniRule"/>
</dbReference>
<dbReference type="GO" id="GO:0006799">
    <property type="term" value="P:polyphosphate biosynthetic process"/>
    <property type="evidence" value="ECO:0007669"/>
    <property type="project" value="UniProtKB-UniRule"/>
</dbReference>
<dbReference type="CDD" id="cd09168">
    <property type="entry name" value="PLDc_PaPPK1_C2_like"/>
    <property type="match status" value="1"/>
</dbReference>
<dbReference type="Gene3D" id="3.30.870.10">
    <property type="entry name" value="Endonuclease Chain A"/>
    <property type="match status" value="2"/>
</dbReference>
<dbReference type="Gene3D" id="3.30.1840.10">
    <property type="entry name" value="Polyphosphate kinase middle domain"/>
    <property type="match status" value="1"/>
</dbReference>
<dbReference type="Gene3D" id="1.20.58.310">
    <property type="entry name" value="Polyphosphate kinase N-terminal domain"/>
    <property type="match status" value="1"/>
</dbReference>
<dbReference type="HAMAP" id="MF_00347">
    <property type="entry name" value="Polyphosphate_kinase"/>
    <property type="match status" value="1"/>
</dbReference>
<dbReference type="InterPro" id="IPR003414">
    <property type="entry name" value="PP_kinase"/>
</dbReference>
<dbReference type="InterPro" id="IPR041108">
    <property type="entry name" value="PP_kinase_C_1"/>
</dbReference>
<dbReference type="InterPro" id="IPR024953">
    <property type="entry name" value="PP_kinase_middle"/>
</dbReference>
<dbReference type="InterPro" id="IPR036830">
    <property type="entry name" value="PP_kinase_middle_dom_sf"/>
</dbReference>
<dbReference type="InterPro" id="IPR025200">
    <property type="entry name" value="PPK_C_dom2"/>
</dbReference>
<dbReference type="InterPro" id="IPR025198">
    <property type="entry name" value="PPK_N_dom"/>
</dbReference>
<dbReference type="InterPro" id="IPR036832">
    <property type="entry name" value="PPK_N_dom_sf"/>
</dbReference>
<dbReference type="NCBIfam" id="TIGR03705">
    <property type="entry name" value="poly_P_kin"/>
    <property type="match status" value="1"/>
</dbReference>
<dbReference type="NCBIfam" id="NF003917">
    <property type="entry name" value="PRK05443.1-1"/>
    <property type="match status" value="1"/>
</dbReference>
<dbReference type="NCBIfam" id="NF003918">
    <property type="entry name" value="PRK05443.1-2"/>
    <property type="match status" value="1"/>
</dbReference>
<dbReference type="NCBIfam" id="NF003921">
    <property type="entry name" value="PRK05443.2-2"/>
    <property type="match status" value="1"/>
</dbReference>
<dbReference type="PANTHER" id="PTHR30218">
    <property type="entry name" value="POLYPHOSPHATE KINASE"/>
    <property type="match status" value="1"/>
</dbReference>
<dbReference type="PANTHER" id="PTHR30218:SF0">
    <property type="entry name" value="POLYPHOSPHATE KINASE"/>
    <property type="match status" value="1"/>
</dbReference>
<dbReference type="Pfam" id="PF02503">
    <property type="entry name" value="PP_kinase"/>
    <property type="match status" value="1"/>
</dbReference>
<dbReference type="Pfam" id="PF13090">
    <property type="entry name" value="PP_kinase_C"/>
    <property type="match status" value="1"/>
</dbReference>
<dbReference type="Pfam" id="PF17941">
    <property type="entry name" value="PP_kinase_C_1"/>
    <property type="match status" value="1"/>
</dbReference>
<dbReference type="Pfam" id="PF13089">
    <property type="entry name" value="PP_kinase_N"/>
    <property type="match status" value="1"/>
</dbReference>
<dbReference type="PIRSF" id="PIRSF015589">
    <property type="entry name" value="PP_kinase"/>
    <property type="match status" value="1"/>
</dbReference>
<dbReference type="SUPFAM" id="SSF56024">
    <property type="entry name" value="Phospholipase D/nuclease"/>
    <property type="match status" value="2"/>
</dbReference>
<dbReference type="SUPFAM" id="SSF143724">
    <property type="entry name" value="PHP14-like"/>
    <property type="match status" value="1"/>
</dbReference>
<dbReference type="SUPFAM" id="SSF140356">
    <property type="entry name" value="PPK N-terminal domain-like"/>
    <property type="match status" value="1"/>
</dbReference>
<gene>
    <name evidence="1" type="primary">ppk</name>
    <name type="ordered locus">PD_1968</name>
</gene>
<comment type="function">
    <text evidence="1">Catalyzes the reversible transfer of the terminal phosphate of ATP to form a long-chain polyphosphate (polyP).</text>
</comment>
<comment type="catalytic activity">
    <reaction evidence="1">
        <text>[phosphate](n) + ATP = [phosphate](n+1) + ADP</text>
        <dbReference type="Rhea" id="RHEA:19573"/>
        <dbReference type="Rhea" id="RHEA-COMP:9859"/>
        <dbReference type="Rhea" id="RHEA-COMP:14280"/>
        <dbReference type="ChEBI" id="CHEBI:16838"/>
        <dbReference type="ChEBI" id="CHEBI:30616"/>
        <dbReference type="ChEBI" id="CHEBI:456216"/>
        <dbReference type="EC" id="2.7.4.1"/>
    </reaction>
</comment>
<comment type="cofactor">
    <cofactor evidence="1">
        <name>Mg(2+)</name>
        <dbReference type="ChEBI" id="CHEBI:18420"/>
    </cofactor>
</comment>
<comment type="PTM">
    <text evidence="1">An intermediate of this reaction is the autophosphorylated ppk in which a phosphate is covalently linked to a histidine residue through a N-P bond.</text>
</comment>
<comment type="similarity">
    <text evidence="1">Belongs to the polyphosphate kinase 1 (PPK1) family.</text>
</comment>
<feature type="chain" id="PRO_0000128671" description="Polyphosphate kinase">
    <location>
        <begin position="1"/>
        <end position="698"/>
    </location>
</feature>
<feature type="active site" description="Phosphohistidine intermediate" evidence="1">
    <location>
        <position position="450"/>
    </location>
</feature>
<feature type="binding site" evidence="1">
    <location>
        <position position="63"/>
    </location>
    <ligand>
        <name>ATP</name>
        <dbReference type="ChEBI" id="CHEBI:30616"/>
    </ligand>
</feature>
<feature type="binding site" evidence="1">
    <location>
        <position position="390"/>
    </location>
    <ligand>
        <name>Mg(2+)</name>
        <dbReference type="ChEBI" id="CHEBI:18420"/>
    </ligand>
</feature>
<feature type="binding site" evidence="1">
    <location>
        <position position="420"/>
    </location>
    <ligand>
        <name>Mg(2+)</name>
        <dbReference type="ChEBI" id="CHEBI:18420"/>
    </ligand>
</feature>
<feature type="binding site" evidence="1">
    <location>
        <position position="483"/>
    </location>
    <ligand>
        <name>ATP</name>
        <dbReference type="ChEBI" id="CHEBI:30616"/>
    </ligand>
</feature>
<feature type="binding site" evidence="1">
    <location>
        <position position="579"/>
    </location>
    <ligand>
        <name>ATP</name>
        <dbReference type="ChEBI" id="CHEBI:30616"/>
    </ligand>
</feature>
<feature type="binding site" evidence="1">
    <location>
        <position position="607"/>
    </location>
    <ligand>
        <name>ATP</name>
        <dbReference type="ChEBI" id="CHEBI:30616"/>
    </ligand>
</feature>
<proteinExistence type="inferred from homology"/>
<organism>
    <name type="scientific">Xylella fastidiosa (strain Temecula1 / ATCC 700964)</name>
    <dbReference type="NCBI Taxonomy" id="183190"/>
    <lineage>
        <taxon>Bacteria</taxon>
        <taxon>Pseudomonadati</taxon>
        <taxon>Pseudomonadota</taxon>
        <taxon>Gammaproteobacteria</taxon>
        <taxon>Lysobacterales</taxon>
        <taxon>Lysobacteraceae</taxon>
        <taxon>Xylella</taxon>
    </lineage>
</organism>
<sequence length="698" mass="78289">MSKSSPIEPVSASDVSQQFRDPGLYLNRELSQLDFNFRVLAQALDEQVPLLERLRFLCISCTNLDEFFEIRVATVRHAQEFGLPPAPDGMRPTVILNAVHDLTTKLVHDQYNCWNQVLCPALASLGVGVLSHNSWNVRQKRWLRGYFRNEIMPVLSPLGLDPAHPFPKIFNKTLNIVVVLNGIDAFGRAGHLAIVRAPRSLPRIIELPQHLSRDGSQNFVFLSSVLSAFVGELFPGMVVKGAYQFRVTRNSELVVDEDEVENLALALRNELVTRGYRLAVRLEIAEDCPIPIVRTLLQNFGLQENAVYRINGPVNLSRVSQVYDMVLRPELKYPPFNPRTVRNSDHIFEIIAKGDVLLYHPYDAFTAVLDLLRQAAADPDVLAIKQTLYRTGKDSTIVDALIQAARSGKDVTVVVELRARFDEEANLGLADKLQEAGVQVVYGVVGYKTHAKMLLIVRREGRKLRRYVHLGTGNYHSGTARIYTDLSLMTANAAIGKDVHQLFLQLSGLAPKMKLECLLQSPFTLHAGVLFRIERETTFARKGCPARIVAKMNALNEPQVVRALYVASQAGVQIDLIVRGACTLRPGVQGISENIRVRSIVGRFLEHSRVYWFANNGTPELFCASADWLERNLLRRVEICFPILNPDLAKRIYSDVLQSYLDDNLNAWELGSDGVYRKLLPETDHAPYSAQAALLESL</sequence>
<evidence type="ECO:0000255" key="1">
    <source>
        <dbReference type="HAMAP-Rule" id="MF_00347"/>
    </source>
</evidence>
<name>PPK1_XYLFT</name>
<accession>Q87A63</accession>
<reference key="1">
    <citation type="journal article" date="2003" name="J. Bacteriol.">
        <title>Comparative analyses of the complete genome sequences of Pierce's disease and citrus variegated chlorosis strains of Xylella fastidiosa.</title>
        <authorList>
            <person name="Van Sluys M.A."/>
            <person name="de Oliveira M.C."/>
            <person name="Monteiro-Vitorello C.B."/>
            <person name="Miyaki C.Y."/>
            <person name="Furlan L.R."/>
            <person name="Camargo L.E.A."/>
            <person name="da Silva A.C.R."/>
            <person name="Moon D.H."/>
            <person name="Takita M.A."/>
            <person name="Lemos E.G.M."/>
            <person name="Machado M.A."/>
            <person name="Ferro M.I.T."/>
            <person name="da Silva F.R."/>
            <person name="Goldman M.H.S."/>
            <person name="Goldman G.H."/>
            <person name="Lemos M.V.F."/>
            <person name="El-Dorry H."/>
            <person name="Tsai S.M."/>
            <person name="Carrer H."/>
            <person name="Carraro D.M."/>
            <person name="de Oliveira R.C."/>
            <person name="Nunes L.R."/>
            <person name="Siqueira W.J."/>
            <person name="Coutinho L.L."/>
            <person name="Kimura E.T."/>
            <person name="Ferro E.S."/>
            <person name="Harakava R."/>
            <person name="Kuramae E.E."/>
            <person name="Marino C.L."/>
            <person name="Giglioti E."/>
            <person name="Abreu I.L."/>
            <person name="Alves L.M.C."/>
            <person name="do Amaral A.M."/>
            <person name="Baia G.S."/>
            <person name="Blanco S.R."/>
            <person name="Brito M.S."/>
            <person name="Cannavan F.S."/>
            <person name="Celestino A.V."/>
            <person name="da Cunha A.F."/>
            <person name="Fenille R.C."/>
            <person name="Ferro J.A."/>
            <person name="Formighieri E.F."/>
            <person name="Kishi L.T."/>
            <person name="Leoni S.G."/>
            <person name="Oliveira A.R."/>
            <person name="Rosa V.E. Jr."/>
            <person name="Sassaki F.T."/>
            <person name="Sena J.A.D."/>
            <person name="de Souza A.A."/>
            <person name="Truffi D."/>
            <person name="Tsukumo F."/>
            <person name="Yanai G.M."/>
            <person name="Zaros L.G."/>
            <person name="Civerolo E.L."/>
            <person name="Simpson A.J.G."/>
            <person name="Almeida N.F. Jr."/>
            <person name="Setubal J.C."/>
            <person name="Kitajima J.P."/>
        </authorList>
    </citation>
    <scope>NUCLEOTIDE SEQUENCE [LARGE SCALE GENOMIC DNA]</scope>
    <source>
        <strain>Temecula1 / ATCC 700964</strain>
    </source>
</reference>